<gene>
    <name type="primary">porA</name>
</gene>
<protein>
    <recommendedName>
        <fullName>Major outer membrane protein P.IA</fullName>
        <shortName>PIA</shortName>
        <shortName>Protein IA</shortName>
    </recommendedName>
    <alternativeName>
        <fullName>Class 1 protein</fullName>
    </alternativeName>
</protein>
<dbReference type="EMBL" id="X52996">
    <property type="protein sequence ID" value="CAA37185.1"/>
    <property type="molecule type" value="Genomic_DNA"/>
</dbReference>
<dbReference type="PIR" id="S11717">
    <property type="entry name" value="MMNH1"/>
</dbReference>
<dbReference type="SMR" id="P18194"/>
<dbReference type="GO" id="GO:0009279">
    <property type="term" value="C:cell outer membrane"/>
    <property type="evidence" value="ECO:0007669"/>
    <property type="project" value="UniProtKB-SubCell"/>
</dbReference>
<dbReference type="GO" id="GO:0046930">
    <property type="term" value="C:pore complex"/>
    <property type="evidence" value="ECO:0007669"/>
    <property type="project" value="UniProtKB-KW"/>
</dbReference>
<dbReference type="GO" id="GO:0015288">
    <property type="term" value="F:porin activity"/>
    <property type="evidence" value="ECO:0007669"/>
    <property type="project" value="UniProtKB-KW"/>
</dbReference>
<dbReference type="GO" id="GO:0034220">
    <property type="term" value="P:monoatomic ion transmembrane transport"/>
    <property type="evidence" value="ECO:0007669"/>
    <property type="project" value="InterPro"/>
</dbReference>
<dbReference type="CDD" id="cd00342">
    <property type="entry name" value="gram_neg_porins"/>
    <property type="match status" value="1"/>
</dbReference>
<dbReference type="Gene3D" id="2.40.160.10">
    <property type="entry name" value="Porin"/>
    <property type="match status" value="1"/>
</dbReference>
<dbReference type="InterPro" id="IPR050298">
    <property type="entry name" value="Gram-neg_bact_OMP"/>
</dbReference>
<dbReference type="InterPro" id="IPR033900">
    <property type="entry name" value="Gram_neg_porin_domain"/>
</dbReference>
<dbReference type="InterPro" id="IPR023614">
    <property type="entry name" value="Porin_dom_sf"/>
</dbReference>
<dbReference type="InterPro" id="IPR001702">
    <property type="entry name" value="Porin_Gram-ve"/>
</dbReference>
<dbReference type="InterPro" id="IPR013793">
    <property type="entry name" value="Porin_Gram-ve_CS"/>
</dbReference>
<dbReference type="InterPro" id="IPR002299">
    <property type="entry name" value="Porin_Neis"/>
</dbReference>
<dbReference type="PANTHER" id="PTHR34501:SF9">
    <property type="entry name" value="MAJOR OUTER MEMBRANE PROTEIN P.IA"/>
    <property type="match status" value="1"/>
</dbReference>
<dbReference type="PANTHER" id="PTHR34501">
    <property type="entry name" value="PROTEIN YDDL-RELATED"/>
    <property type="match status" value="1"/>
</dbReference>
<dbReference type="Pfam" id="PF00267">
    <property type="entry name" value="Porin_1"/>
    <property type="match status" value="1"/>
</dbReference>
<dbReference type="PRINTS" id="PR00182">
    <property type="entry name" value="ECOLNEIPORIN"/>
</dbReference>
<dbReference type="PRINTS" id="PR00184">
    <property type="entry name" value="NEISSPPORIN"/>
</dbReference>
<dbReference type="SUPFAM" id="SSF56935">
    <property type="entry name" value="Porins"/>
    <property type="match status" value="1"/>
</dbReference>
<dbReference type="PROSITE" id="PS00576">
    <property type="entry name" value="GRAM_NEG_PORIN"/>
    <property type="match status" value="1"/>
</dbReference>
<accession>P18194</accession>
<name>OMPA2_NEIMC</name>
<proteinExistence type="inferred from homology"/>
<reference key="1">
    <citation type="journal article" date="1990" name="J. Exp. Med.">
        <title>Deduced amino acid sequences of class 1 protein (PorA) from three strains of Neisseria meningitidis. Synthetic peptides define the epitopes responsible for serosubtype specificity.</title>
        <authorList>
            <person name="McGuinnes B."/>
            <person name="Barlow A.K."/>
            <person name="Clarke I.N."/>
            <person name="Farley J.E."/>
            <person name="Anilionis A."/>
            <person name="Poolman J.T."/>
            <person name="Heckels J.E."/>
        </authorList>
    </citation>
    <scope>NUCLEOTIDE SEQUENCE [GENOMIC DNA]</scope>
    <source>
        <strain>MC51 / Serogroup C / Type NT / Subtype 15</strain>
    </source>
</reference>
<feature type="signal peptide">
    <location>
        <begin position="1"/>
        <end position="19"/>
    </location>
</feature>
<feature type="chain" id="PRO_0000025276" description="Major outer membrane protein P.IA">
    <location>
        <begin position="20"/>
        <end position="387"/>
    </location>
</feature>
<organism>
    <name type="scientific">Neisseria meningitidis serogroup C</name>
    <dbReference type="NCBI Taxonomy" id="135720"/>
    <lineage>
        <taxon>Bacteria</taxon>
        <taxon>Pseudomonadati</taxon>
        <taxon>Pseudomonadota</taxon>
        <taxon>Betaproteobacteria</taxon>
        <taxon>Neisseriales</taxon>
        <taxon>Neisseriaceae</taxon>
        <taxon>Neisseria</taxon>
    </lineage>
</organism>
<evidence type="ECO:0000305" key="1"/>
<keyword id="KW-0998">Cell outer membrane</keyword>
<keyword id="KW-0406">Ion transport</keyword>
<keyword id="KW-0472">Membrane</keyword>
<keyword id="KW-0626">Porin</keyword>
<keyword id="KW-0732">Signal</keyword>
<keyword id="KW-0812">Transmembrane</keyword>
<keyword id="KW-1134">Transmembrane beta strand</keyword>
<keyword id="KW-0813">Transport</keyword>
<comment type="function">
    <text>Serves as a slightly cation selective porin. Major antigen on the gonococcal cell surface and it may have pathogenic properties in addition to its porin activity.</text>
</comment>
<comment type="subunit">
    <text>Homotrimer.</text>
</comment>
<comment type="subcellular location">
    <subcellularLocation>
        <location>Cell outer membrane</location>
        <topology>Multi-pass membrane protein</topology>
    </subcellularLocation>
</comment>
<comment type="similarity">
    <text evidence="1">Belongs to the Gram-negative porin family.</text>
</comment>
<sequence>MRKKLTALVLSALPLAAVADVSLYGEIKAGVEGRNFQLQLTEPPSKSQPQVKVTKAKSRIRTKISDFGSFIGFKGSEDLGEGLKAVWQLEQDVSVAGGGATQWGNRESFVGLAGEFGTLRAGRVANQFDDASQAIDPWDSNNDVASQLGIFKRHDDMPVSVRYDSPDFSGFSGSVQFVPIQNSKSAYTPAHYTRQNNTDVFVPAVVGKPGSDVYYAGLNYKNGGFAGSYAFKYARHANVGRDAFELFLLGSTSDEAKGTDPLKNHQVHRLTGGYEEGGLNLALAAQLDLSENGDKAKTKNSTTEIAATASYRFGNAVPRISYAHGFDLIERGKKGENTSYDQIIAGVDYDFSKRTSAIVSGAWLKRNTGIGNYTQINAASVGLRHKF</sequence>